<feature type="chain" id="PRO_0000056983" description="GDP-mannose mannosyl hydrolase">
    <location>
        <begin position="1"/>
        <end position="159"/>
    </location>
</feature>
<feature type="domain" description="Nudix hydrolase" evidence="1">
    <location>
        <begin position="13"/>
        <end position="153"/>
    </location>
</feature>
<feature type="short sequence motif" description="Nudix box">
    <location>
        <begin position="50"/>
        <end position="71"/>
    </location>
</feature>
<feature type="binding site">
    <location>
        <begin position="2"/>
        <end position="3"/>
    </location>
    <ligand>
        <name>substrate</name>
    </ligand>
</feature>
<feature type="binding site" evidence="1 4 6">
    <location>
        <position position="8"/>
    </location>
    <ligand>
        <name>substrate</name>
    </ligand>
</feature>
<feature type="binding site" evidence="1 4 6">
    <location>
        <position position="36"/>
    </location>
    <ligand>
        <name>substrate</name>
    </ligand>
</feature>
<feature type="binding site" evidence="1 4 6">
    <location>
        <position position="49"/>
    </location>
    <ligand>
        <name>Mg(2+)</name>
        <dbReference type="ChEBI" id="CHEBI:18420"/>
    </ligand>
</feature>
<feature type="binding site" evidence="1 4 6">
    <location>
        <position position="69"/>
    </location>
    <ligand>
        <name>Mg(2+)</name>
        <dbReference type="ChEBI" id="CHEBI:18420"/>
    </ligand>
</feature>
<feature type="binding site" evidence="1 4 6">
    <location>
        <position position="122"/>
    </location>
    <ligand>
        <name>Mg(2+)</name>
        <dbReference type="ChEBI" id="CHEBI:18420"/>
    </ligand>
</feature>
<feature type="site" description="Critical for catalysis">
    <location>
        <position position="123"/>
    </location>
</feature>
<feature type="mutagenesis site" description="Increases Km for GDP-mannose 5-fold. Reduces activity 120-fold." evidence="5">
    <original>D</original>
    <variation>A</variation>
    <location>
        <position position="21"/>
    </location>
</feature>
<feature type="mutagenesis site" description="Increases Km for GDP-mannose 9-fold. Reduces activity 400-fold." evidence="5">
    <original>D</original>
    <variation>N</variation>
    <location>
        <position position="21"/>
    </location>
</feature>
<feature type="mutagenesis site" description="Increases Km for GDP-mannose 9-fold. Reduces activity 24-fold." evidence="5">
    <original>R</original>
    <variation>Q</variation>
    <location>
        <position position="36"/>
    </location>
</feature>
<feature type="mutagenesis site" description="Increases Km for GDP-mannose 40-fold. Reduces activity 10-fold." evidence="3">
    <original>R</original>
    <variation>K</variation>
    <location>
        <position position="51"/>
    </location>
</feature>
<feature type="mutagenesis site" description="Increases Km for GDP-mannose 40-fold. Reduces activity 300-fold." evidence="3">
    <original>R</original>
    <variation>Q</variation>
    <location>
        <position position="51"/>
    </location>
</feature>
<feature type="mutagenesis site" description="Increases Km for GDP-mannose 80-fold. Reduces activity 24-fold." evidence="3">
    <original>R</original>
    <variation>Q</variation>
    <location>
        <position position="64"/>
    </location>
</feature>
<feature type="mutagenesis site" description="Increases Km for GDP-mannose 10-fold. Increases Km for magnesium 40-fold. Reduces activity 150-fold.">
    <original>E</original>
    <variation>Q</variation>
    <location>
        <position position="69"/>
    </location>
</feature>
<feature type="mutagenesis site" description="Increases Km for GDP-mannose 4-fold. Reduces activity 200-fold." evidence="3">
    <original>H</original>
    <variation>Q</variation>
    <location>
        <position position="87"/>
    </location>
</feature>
<feature type="mutagenesis site" description="Increases Km for GDP-mannose 14-fold. Reduces activity 7-fold." evidence="3">
    <original>H</original>
    <variation>Q</variation>
    <location>
        <position position="101"/>
    </location>
</feature>
<feature type="mutagenesis site" description="Increases Km for GDP-mannose 7-fold. Reduces activity 100-fold." evidence="5">
    <original>Y</original>
    <variation>F</variation>
    <location>
        <position position="102"/>
    </location>
</feature>
<feature type="mutagenesis site" description="Increases Km for GDP-mannose 5-fold. Reduces activity 2000-fold." evidence="3">
    <original>H</original>
    <variation>Q</variation>
    <location>
        <position position="123"/>
    </location>
</feature>
<feature type="helix" evidence="10">
    <location>
        <begin position="5"/>
        <end position="14"/>
    </location>
</feature>
<feature type="strand" evidence="10">
    <location>
        <begin position="17"/>
        <end position="25"/>
    </location>
</feature>
<feature type="strand" evidence="10">
    <location>
        <begin position="31"/>
        <end position="36"/>
    </location>
</feature>
<feature type="strand" evidence="10">
    <location>
        <begin position="38"/>
        <end position="41"/>
    </location>
</feature>
<feature type="strand" evidence="10">
    <location>
        <begin position="44"/>
        <end position="46"/>
    </location>
</feature>
<feature type="strand" evidence="10">
    <location>
        <begin position="49"/>
        <end position="51"/>
    </location>
</feature>
<feature type="helix" evidence="10">
    <location>
        <begin position="58"/>
        <end position="70"/>
    </location>
</feature>
<feature type="helix" evidence="10">
    <location>
        <begin position="76"/>
        <end position="78"/>
    </location>
</feature>
<feature type="strand" evidence="10">
    <location>
        <begin position="79"/>
        <end position="92"/>
    </location>
</feature>
<feature type="strand" evidence="10">
    <location>
        <begin position="95"/>
        <end position="98"/>
    </location>
</feature>
<feature type="strand" evidence="10">
    <location>
        <begin position="100"/>
        <end position="110"/>
    </location>
</feature>
<feature type="helix" evidence="10">
    <location>
        <begin position="113"/>
        <end position="115"/>
    </location>
</feature>
<feature type="strand" evidence="10">
    <location>
        <begin position="120"/>
        <end position="129"/>
    </location>
</feature>
<feature type="helix" evidence="10">
    <location>
        <begin position="131"/>
        <end position="136"/>
    </location>
</feature>
<feature type="strand" evidence="11">
    <location>
        <begin position="138"/>
        <end position="140"/>
    </location>
</feature>
<feature type="helix" evidence="10">
    <location>
        <begin position="142"/>
        <end position="145"/>
    </location>
</feature>
<feature type="helix" evidence="10">
    <location>
        <begin position="146"/>
        <end position="148"/>
    </location>
</feature>
<feature type="helix" evidence="10">
    <location>
        <begin position="150"/>
        <end position="153"/>
    </location>
</feature>
<evidence type="ECO:0000255" key="1">
    <source>
        <dbReference type="HAMAP-Rule" id="MF_00941"/>
    </source>
</evidence>
<evidence type="ECO:0000269" key="2">
    <source>
    </source>
</evidence>
<evidence type="ECO:0000269" key="3">
    <source>
    </source>
</evidence>
<evidence type="ECO:0000269" key="4">
    <source>
    </source>
</evidence>
<evidence type="ECO:0000269" key="5">
    <source>
    </source>
</evidence>
<evidence type="ECO:0000269" key="6">
    <source>
    </source>
</evidence>
<evidence type="ECO:0000269" key="7">
    <source>
    </source>
</evidence>
<evidence type="ECO:0000269" key="8">
    <source>
    </source>
</evidence>
<evidence type="ECO:0000305" key="9"/>
<evidence type="ECO:0007829" key="10">
    <source>
        <dbReference type="PDB" id="1RYA"/>
    </source>
</evidence>
<evidence type="ECO:0007829" key="11">
    <source>
        <dbReference type="PDB" id="2GT2"/>
    </source>
</evidence>
<sequence>MFLRQEDFATVVRSTPLVSLDFIVENSRGEFLLGKRTNRPAQGYWFVPGGRVQKDETLEAAFERLTMAELGLRLPITAGQFYGVWQHFYDDNFSGTDFTTHYVVLGFRFRVSEEELLLPDEQHDDYRWLTSDALLASDNVHANSRAYFLAEKRTGVPGL</sequence>
<name>GMM_ECOLI</name>
<dbReference type="EC" id="3.6.1.-" evidence="1 7"/>
<dbReference type="EMBL" id="U38473">
    <property type="protein sequence ID" value="AAC77844.1"/>
    <property type="status" value="ALT_INIT"/>
    <property type="molecule type" value="Genomic_DNA"/>
</dbReference>
<dbReference type="EMBL" id="U00096">
    <property type="protein sequence ID" value="AAC75112.2"/>
    <property type="molecule type" value="Genomic_DNA"/>
</dbReference>
<dbReference type="EMBL" id="AP009048">
    <property type="protein sequence ID" value="BAA15907.2"/>
    <property type="molecule type" value="Genomic_DNA"/>
</dbReference>
<dbReference type="PIR" id="E55239">
    <property type="entry name" value="E55239"/>
</dbReference>
<dbReference type="RefSeq" id="NP_416555.2">
    <property type="nucleotide sequence ID" value="NC_000913.3"/>
</dbReference>
<dbReference type="RefSeq" id="WP_001393539.1">
    <property type="nucleotide sequence ID" value="NZ_LN832404.1"/>
</dbReference>
<dbReference type="PDB" id="1RYA">
    <property type="method" value="X-ray"/>
    <property type="resolution" value="1.30 A"/>
    <property type="chains" value="A/B=1-159"/>
</dbReference>
<dbReference type="PDB" id="2GT2">
    <property type="method" value="X-ray"/>
    <property type="resolution" value="2.00 A"/>
    <property type="chains" value="A/B/C/D=1-159"/>
</dbReference>
<dbReference type="PDB" id="2GT4">
    <property type="method" value="X-ray"/>
    <property type="resolution" value="2.30 A"/>
    <property type="chains" value="A/B/C=1-159"/>
</dbReference>
<dbReference type="PDBsum" id="1RYA"/>
<dbReference type="PDBsum" id="2GT2"/>
<dbReference type="PDBsum" id="2GT4"/>
<dbReference type="SMR" id="P32056"/>
<dbReference type="BioGRID" id="4261145">
    <property type="interactions" value="371"/>
</dbReference>
<dbReference type="FunCoup" id="P32056">
    <property type="interactions" value="16"/>
</dbReference>
<dbReference type="STRING" id="511145.b2051"/>
<dbReference type="DrugBank" id="DB04315">
    <property type="generic name" value="Guanosine-5'-Diphosphate"/>
</dbReference>
<dbReference type="PaxDb" id="511145-b2051"/>
<dbReference type="EnsemblBacteria" id="AAC75112">
    <property type="protein sequence ID" value="AAC75112"/>
    <property type="gene ID" value="b2051"/>
</dbReference>
<dbReference type="GeneID" id="946559"/>
<dbReference type="KEGG" id="ecj:JW5335"/>
<dbReference type="KEGG" id="eco:b2051"/>
<dbReference type="KEGG" id="ecoc:C3026_11545"/>
<dbReference type="PATRIC" id="fig|511145.12.peg.2128"/>
<dbReference type="EchoBASE" id="EB1737"/>
<dbReference type="eggNOG" id="COG1051">
    <property type="taxonomic scope" value="Bacteria"/>
</dbReference>
<dbReference type="HOGENOM" id="CLU_037162_12_0_6"/>
<dbReference type="InParanoid" id="P32056"/>
<dbReference type="OMA" id="HDNSRAY"/>
<dbReference type="OrthoDB" id="542521at2"/>
<dbReference type="PhylomeDB" id="P32056"/>
<dbReference type="BioCyc" id="EcoCyc:GDPMANMANHYDRO-MONOMER"/>
<dbReference type="BioCyc" id="MetaCyc:GDPMANMANHYDRO-MONOMER"/>
<dbReference type="SABIO-RK" id="P32056"/>
<dbReference type="EvolutionaryTrace" id="P32056"/>
<dbReference type="PRO" id="PR:P32056"/>
<dbReference type="Proteomes" id="UP000000625">
    <property type="component" value="Chromosome"/>
</dbReference>
<dbReference type="GO" id="GO:0047917">
    <property type="term" value="F:GDP-glucosidase activity"/>
    <property type="evidence" value="ECO:0000314"/>
    <property type="project" value="EcoCyc"/>
</dbReference>
<dbReference type="GO" id="GO:0008727">
    <property type="term" value="F:GDP-mannose mannosyl hydrolase activity"/>
    <property type="evidence" value="ECO:0000314"/>
    <property type="project" value="UniProtKB"/>
</dbReference>
<dbReference type="GO" id="GO:0042802">
    <property type="term" value="F:identical protein binding"/>
    <property type="evidence" value="ECO:0000314"/>
    <property type="project" value="UniProtKB"/>
</dbReference>
<dbReference type="GO" id="GO:0000287">
    <property type="term" value="F:magnesium ion binding"/>
    <property type="evidence" value="ECO:0000314"/>
    <property type="project" value="UniProtKB"/>
</dbReference>
<dbReference type="GO" id="GO:0030145">
    <property type="term" value="F:manganese ion binding"/>
    <property type="evidence" value="ECO:0000315"/>
    <property type="project" value="EcoCyc"/>
</dbReference>
<dbReference type="GO" id="GO:0042803">
    <property type="term" value="F:protein homodimerization activity"/>
    <property type="evidence" value="ECO:0000314"/>
    <property type="project" value="UniProtKB"/>
</dbReference>
<dbReference type="GO" id="GO:0009103">
    <property type="term" value="P:lipopolysaccharide biosynthetic process"/>
    <property type="evidence" value="ECO:0007669"/>
    <property type="project" value="UniProtKB-KW"/>
</dbReference>
<dbReference type="CDD" id="cd03430">
    <property type="entry name" value="NUDIX_GDPMH_NudD"/>
    <property type="match status" value="1"/>
</dbReference>
<dbReference type="FunFam" id="3.90.79.10:FF:000064">
    <property type="entry name" value="GDP-mannose mannosyl hydrolase"/>
    <property type="match status" value="1"/>
</dbReference>
<dbReference type="Gene3D" id="3.90.79.10">
    <property type="entry name" value="Nucleoside Triphosphate Pyrophosphohydrolase"/>
    <property type="match status" value="1"/>
</dbReference>
<dbReference type="HAMAP" id="MF_00941">
    <property type="entry name" value="GDPMH_gmm"/>
    <property type="match status" value="1"/>
</dbReference>
<dbReference type="InterPro" id="IPR033715">
    <property type="entry name" value="GDPMH"/>
</dbReference>
<dbReference type="InterPro" id="IPR028613">
    <property type="entry name" value="GDPMH_Gmm"/>
</dbReference>
<dbReference type="InterPro" id="IPR015797">
    <property type="entry name" value="NUDIX_hydrolase-like_dom_sf"/>
</dbReference>
<dbReference type="InterPro" id="IPR020084">
    <property type="entry name" value="NUDIX_hydrolase_CS"/>
</dbReference>
<dbReference type="InterPro" id="IPR000086">
    <property type="entry name" value="NUDIX_hydrolase_dom"/>
</dbReference>
<dbReference type="NCBIfam" id="NF011963">
    <property type="entry name" value="PRK15434.1"/>
    <property type="match status" value="1"/>
</dbReference>
<dbReference type="PANTHER" id="PTHR43046">
    <property type="entry name" value="GDP-MANNOSE MANNOSYL HYDROLASE"/>
    <property type="match status" value="1"/>
</dbReference>
<dbReference type="PANTHER" id="PTHR43046:SF12">
    <property type="entry name" value="GDP-MANNOSE MANNOSYL HYDROLASE"/>
    <property type="match status" value="1"/>
</dbReference>
<dbReference type="Pfam" id="PF00293">
    <property type="entry name" value="NUDIX"/>
    <property type="match status" value="1"/>
</dbReference>
<dbReference type="PIRSF" id="PIRSF037599">
    <property type="entry name" value="GDPMH"/>
    <property type="match status" value="1"/>
</dbReference>
<dbReference type="SUPFAM" id="SSF55811">
    <property type="entry name" value="Nudix"/>
    <property type="match status" value="1"/>
</dbReference>
<dbReference type="PROSITE" id="PS51462">
    <property type="entry name" value="NUDIX"/>
    <property type="match status" value="1"/>
</dbReference>
<dbReference type="PROSITE" id="PS00893">
    <property type="entry name" value="NUDIX_BOX"/>
    <property type="match status" value="1"/>
</dbReference>
<comment type="function">
    <text evidence="2 7 8">Hydrolyzes both GDP-mannose and GDP-glucose (PubMed:10913267, PubMed:23481913, PubMed:7592609). Could participate in the regulation of cell wall biosynthesis by influencing the concentration of GDP-mannose or GDP-glucose in the cell. Might also be involved in the biosynthesis of the slime polysaccharide colanic acid (PubMed:10913267, PubMed:7592609).</text>
</comment>
<comment type="catalytic activity">
    <reaction evidence="1 2 7 8">
        <text>GDP-alpha-D-mannose + H2O = D-mannose + GDP + H(+)</text>
        <dbReference type="Rhea" id="RHEA:28102"/>
        <dbReference type="ChEBI" id="CHEBI:4208"/>
        <dbReference type="ChEBI" id="CHEBI:15377"/>
        <dbReference type="ChEBI" id="CHEBI:15378"/>
        <dbReference type="ChEBI" id="CHEBI:57527"/>
        <dbReference type="ChEBI" id="CHEBI:58189"/>
    </reaction>
</comment>
<comment type="cofactor">
    <cofactor evidence="1 2 3 4">
        <name>Mg(2+)</name>
        <dbReference type="ChEBI" id="CHEBI:18420"/>
    </cofactor>
    <text evidence="1 2 3 4">Binds 1 Mg(2+) ion per subunit.</text>
</comment>
<comment type="biophysicochemical properties">
    <kinetics>
        <KM evidence="8">0.3 mM for GDP-mannose</KM>
        <KM evidence="8">1.9 mM for GDP-glucose</KM>
        <KM evidence="7">220 uM for GDP-mannose (at pH 8.5 and 37 degrees Celsius)</KM>
        <Vmax evidence="8">1.6 umol/min/mg enzyme with GDP-mannose as substrate</Vmax>
        <Vmax evidence="8">7.5 umol/min/mg enzyme with GDP-glucose as substrate</Vmax>
        <text evidence="7 8">GDP-alpha-D-mannose is likely to be the biological substrate, but the kcat/KM obtained with GDP-alpha-D-glucose is very similar to that with GDP-alpha-D-mannose (PubMed:7592609). kcat is 0.35 sec(-1) for GDP-mannose (PubMed:23481913).</text>
    </kinetics>
    <phDependence>
        <text evidence="8">Optimum pH is 9.3.</text>
    </phDependence>
</comment>
<comment type="subunit">
    <text evidence="1 2 4 6">Homodimer.</text>
</comment>
<comment type="mass spectrometry"/>
<comment type="similarity">
    <text evidence="1">Belongs to the Nudix hydrolase family.</text>
</comment>
<comment type="sequence caution" evidence="9">
    <conflict type="erroneous initiation">
        <sequence resource="EMBL-CDS" id="AAC77844"/>
    </conflict>
    <text>Extended N-terminus.</text>
</comment>
<accession>P32056</accession>
<organism>
    <name type="scientific">Escherichia coli (strain K12)</name>
    <dbReference type="NCBI Taxonomy" id="83333"/>
    <lineage>
        <taxon>Bacteria</taxon>
        <taxon>Pseudomonadati</taxon>
        <taxon>Pseudomonadota</taxon>
        <taxon>Gammaproteobacteria</taxon>
        <taxon>Enterobacterales</taxon>
        <taxon>Enterobacteriaceae</taxon>
        <taxon>Escherichia</taxon>
    </lineage>
</organism>
<proteinExistence type="evidence at protein level"/>
<protein>
    <recommendedName>
        <fullName evidence="1">GDP-mannose mannosyl hydrolase</fullName>
        <shortName evidence="1">GDPMH</shortName>
        <ecNumber evidence="1 7">3.6.1.-</ecNumber>
    </recommendedName>
    <alternativeName>
        <fullName>Colanic acid biosynthesis protein WcaH</fullName>
    </alternativeName>
</protein>
<keyword id="KW-0002">3D-structure</keyword>
<keyword id="KW-0378">Hydrolase</keyword>
<keyword id="KW-0448">Lipopolysaccharide biosynthesis</keyword>
<keyword id="KW-0460">Magnesium</keyword>
<keyword id="KW-0479">Metal-binding</keyword>
<keyword id="KW-1185">Reference proteome</keyword>
<reference key="1">
    <citation type="journal article" date="1994" name="Mol. Biol. Evol.">
        <title>Evidence for effect of random genetic drift on G+C content after lateral transfer of fucose pathway genes to Escherichia coli K-12.</title>
        <authorList>
            <person name="Aoyama K."/>
            <person name="Haase A.M."/>
            <person name="Reeves P.R."/>
        </authorList>
    </citation>
    <scope>NUCLEOTIDE SEQUENCE [GENOMIC DNA]</scope>
    <source>
        <strain>K12</strain>
    </source>
</reference>
<reference key="2">
    <citation type="journal article" date="1996" name="J. Bacteriol.">
        <title>Organization of the Escherichia coli K-12 gene cluster responsible for production of the extracellular polysaccharide colanic acid.</title>
        <authorList>
            <person name="Stevenson G."/>
            <person name="Andrianopoulos K."/>
            <person name="Hobbs M."/>
            <person name="Reeves P.R."/>
        </authorList>
    </citation>
    <scope>NUCLEOTIDE SEQUENCE [GENOMIC DNA]</scope>
    <source>
        <strain>K12</strain>
    </source>
</reference>
<reference key="3">
    <citation type="journal article" date="1996" name="DNA Res.">
        <title>A 460-kb DNA sequence of the Escherichia coli K-12 genome corresponding to the 40.1-50.0 min region on the linkage map.</title>
        <authorList>
            <person name="Itoh T."/>
            <person name="Aiba H."/>
            <person name="Baba T."/>
            <person name="Fujita K."/>
            <person name="Hayashi K."/>
            <person name="Inada T."/>
            <person name="Isono K."/>
            <person name="Kasai H."/>
            <person name="Kimura S."/>
            <person name="Kitakawa M."/>
            <person name="Kitagawa M."/>
            <person name="Makino K."/>
            <person name="Miki T."/>
            <person name="Mizobuchi K."/>
            <person name="Mori H."/>
            <person name="Mori T."/>
            <person name="Motomura K."/>
            <person name="Nakade S."/>
            <person name="Nakamura Y."/>
            <person name="Nashimoto H."/>
            <person name="Nishio Y."/>
            <person name="Oshima T."/>
            <person name="Saito N."/>
            <person name="Sampei G."/>
            <person name="Seki Y."/>
            <person name="Sivasundaram S."/>
            <person name="Tagami H."/>
            <person name="Takeda J."/>
            <person name="Takemoto K."/>
            <person name="Wada C."/>
            <person name="Yamamoto Y."/>
            <person name="Horiuchi T."/>
        </authorList>
    </citation>
    <scope>NUCLEOTIDE SEQUENCE [LARGE SCALE GENOMIC DNA]</scope>
    <source>
        <strain>K12 / W3110 / ATCC 27325 / DSM 5911</strain>
    </source>
</reference>
<reference key="4">
    <citation type="journal article" date="1997" name="Science">
        <title>The complete genome sequence of Escherichia coli K-12.</title>
        <authorList>
            <person name="Blattner F.R."/>
            <person name="Plunkett G. III"/>
            <person name="Bloch C.A."/>
            <person name="Perna N.T."/>
            <person name="Burland V."/>
            <person name="Riley M."/>
            <person name="Collado-Vides J."/>
            <person name="Glasner J.D."/>
            <person name="Rode C.K."/>
            <person name="Mayhew G.F."/>
            <person name="Gregor J."/>
            <person name="Davis N.W."/>
            <person name="Kirkpatrick H.A."/>
            <person name="Goeden M.A."/>
            <person name="Rose D.J."/>
            <person name="Mau B."/>
            <person name="Shao Y."/>
        </authorList>
    </citation>
    <scope>NUCLEOTIDE SEQUENCE [LARGE SCALE GENOMIC DNA]</scope>
    <source>
        <strain>K12 / MG1655 / ATCC 47076</strain>
    </source>
</reference>
<reference key="5">
    <citation type="journal article" date="2006" name="Mol. Syst. Biol.">
        <title>Highly accurate genome sequences of Escherichia coli K-12 strains MG1655 and W3110.</title>
        <authorList>
            <person name="Hayashi K."/>
            <person name="Morooka N."/>
            <person name="Yamamoto Y."/>
            <person name="Fujita K."/>
            <person name="Isono K."/>
            <person name="Choi S."/>
            <person name="Ohtsubo E."/>
            <person name="Baba T."/>
            <person name="Wanner B.L."/>
            <person name="Mori H."/>
            <person name="Horiuchi T."/>
        </authorList>
    </citation>
    <scope>NUCLEOTIDE SEQUENCE [LARGE SCALE GENOMIC DNA]</scope>
    <source>
        <strain>K12 / W3110 / ATCC 27325 / DSM 5911</strain>
    </source>
</reference>
<reference key="6">
    <citation type="journal article" date="1995" name="J. Biol. Chem.">
        <title>A novel GDP-mannose mannosyl hydrolase shares homology with the MutT family of enzymes.</title>
        <authorList>
            <person name="Frick D.N."/>
            <person name="Townsend B.D."/>
            <person name="Bessman M.J."/>
        </authorList>
    </citation>
    <scope>FUNCTION</scope>
    <scope>CATALYTIC ACTIVITY</scope>
    <scope>BIOPHYSICOCHEMICAL PROPERTIES</scope>
    <source>
        <strain>ATCC 33694 / HB101</strain>
    </source>
</reference>
<reference key="7">
    <citation type="journal article" date="2000" name="Biochemistry">
        <title>GDP-mannose mannosyl hydrolase catalyzes nucleophilic substitution at carbon, unlike all other Nudix hydrolases.</title>
        <authorList>
            <person name="Legler P.M."/>
            <person name="Massiah M.A."/>
            <person name="Bessman M.J."/>
            <person name="Mildvan A.S."/>
        </authorList>
    </citation>
    <scope>FUNCTION</scope>
    <scope>CATALYTIC ACTIVITY</scope>
    <scope>COFACTOR</scope>
    <scope>SUBUNIT</scope>
    <scope>MASS SPECTROMETRY</scope>
    <source>
        <strain>ATCC 33694 / HB101</strain>
    </source>
</reference>
<reference key="8">
    <citation type="journal article" date="2002" name="Biochemistry">
        <title>Mutational, kinetic, and NMR studies of the mechanism of E. coli GDP-mannose mannosyl hydrolase, an unusual Nudix enzyme.</title>
        <authorList>
            <person name="Legler P.M."/>
            <person name="Massiah M.A."/>
            <person name="Mildvan A.S."/>
        </authorList>
    </citation>
    <scope>MUTAGENESIS OF ARG-51; ARG-64; HIS-87; HIS-101 AND HIS-123</scope>
    <scope>COFACTOR</scope>
</reference>
<reference key="9">
    <citation type="journal article" date="2005" name="Biochemistry">
        <title>Mutational, structural, and kinetic evidence for a dissociative mechanism in the GDP-mannose mannosyl hydrolase reaction.</title>
        <authorList>
            <person name="Xia Z."/>
            <person name="Azurmendi H.F."/>
            <person name="Lairson L.L."/>
            <person name="Withers S.G."/>
            <person name="Gabelli S.B."/>
            <person name="Bianchet M.A."/>
            <person name="Amzel L.M."/>
            <person name="Mildvan A.S."/>
        </authorList>
    </citation>
    <scope>MUTAGENESIS OF ASP-21; ARG-36 AND TYR-102</scope>
</reference>
<reference key="10">
    <citation type="journal article" date="2013" name="Anal. Biochem.">
        <title>A continuous fluorescence assay for the characterization of Nudix hydrolases.</title>
        <authorList>
            <person name="Xu A."/>
            <person name="Desai A.M."/>
            <person name="Brenner S.E."/>
            <person name="Kirsch J.F."/>
        </authorList>
    </citation>
    <scope>FUNCTION</scope>
    <scope>CATALYTIC ACTIVITY</scope>
    <scope>BIOPHYSICOCHEMICAL PROPERTIES</scope>
</reference>
<reference key="11">
    <citation type="journal article" date="2004" name="Structure">
        <title>Structure and mechanism of GDP-mannose glycosyl hydrolase, a Nudix enzyme that cleaves at carbon instead of phosphorus.</title>
        <authorList>
            <person name="Gabelli S.B."/>
            <person name="Bianchet M.A."/>
            <person name="Azurmendi H.F."/>
            <person name="Xia Z."/>
            <person name="Sarawat V."/>
            <person name="Mildvan A.S."/>
            <person name="Amzel L.M."/>
        </authorList>
    </citation>
    <scope>X-RAY CRYSTALLOGRAPHY (1.3 ANGSTROMS) IN COMPLEX WITH SUBSTRATE AND MAGNESIUM</scope>
    <scope>COFACTOR</scope>
    <scope>SUBUNIT</scope>
</reference>
<reference key="12">
    <citation type="journal article" date="2006" name="Biochemistry">
        <title>X-ray, NMR, and mutational studies of the catalytic cycle of the GDP-mannose mannosyl hydrolase reaction.</title>
        <authorList>
            <person name="Gabelli S.B."/>
            <person name="Azurmendi H.F."/>
            <person name="Bianchet M.A."/>
            <person name="Amzel L.M."/>
            <person name="Mildvan A.S."/>
        </authorList>
    </citation>
    <scope>X-RAY CRYSTALLOGRAPHY (2.0 ANGSTROMS) OF MUTANT PHE-102 IN COMPLEX WITH SUBSTRATE AND MAGNESIUM</scope>
</reference>
<gene>
    <name evidence="1" type="primary">gmm</name>
    <name type="synonym">nudD</name>
    <name type="synonym">wcaH</name>
    <name type="synonym">yefC</name>
    <name type="ordered locus">b2051</name>
    <name type="ordered locus">JW5335</name>
</gene>